<gene>
    <name type="primary">SLC10A6</name>
    <name type="synonym">SOAT</name>
</gene>
<comment type="function">
    <text evidence="2 3">Transports sulfoconjugated steroid hormones from the extracellular compartment into the cytosol in a sodium-dependent manner without hydrolysis. Steroid sulfate hormones are commonly considered to be biologically inactive metabolites, that may be activated by steroid sulfatases into free steroids (By similarity). May play an important role by delivering sulfoconjugated steroids to specific target cells in reproductive organs (By similarity). May play a role transporting the estriol precursor 16alpha-hydroxydehydroepiandrosterone 3-sulfate (16a-OH-DHEAS) at the fetal blood vessel endothelium (By similarity). Can also transport other sulfoconjugated molecules such as taurolithocholic acid-3-sulfate and sulfoconjugated pyrenes (By similarity).</text>
</comment>
<comment type="catalytic activity">
    <reaction evidence="2">
        <text>estrone 3-sulfate(out) + 2 Na(+)(out) = estrone 3-sulfate(in) + 2 Na(+)(in)</text>
        <dbReference type="Rhea" id="RHEA:71083"/>
        <dbReference type="ChEBI" id="CHEBI:29101"/>
        <dbReference type="ChEBI" id="CHEBI:60050"/>
    </reaction>
</comment>
<comment type="catalytic activity">
    <reaction evidence="2">
        <text>17beta-estradiol 3-sulfate(out) + 2 Na(+)(out) = 17beta-estradiol 3-sulfate(in) + 2 Na(+)(in)</text>
        <dbReference type="Rhea" id="RHEA:71087"/>
        <dbReference type="ChEBI" id="CHEBI:29101"/>
        <dbReference type="ChEBI" id="CHEBI:136582"/>
    </reaction>
</comment>
<comment type="catalytic activity">
    <reaction evidence="2">
        <text>dehydroepiandrosterone 3-sulfate(out) + 2 Na(+)(out) = dehydroepiandrosterone 3-sulfate(in) + 2 Na(+)(in)</text>
        <dbReference type="Rhea" id="RHEA:71091"/>
        <dbReference type="ChEBI" id="CHEBI:29101"/>
        <dbReference type="ChEBI" id="CHEBI:57905"/>
    </reaction>
</comment>
<comment type="catalytic activity">
    <reaction evidence="2">
        <text>androst-5-ene-diol 3-sulfate(out) + 2 Na(+)(out) = androst-5-ene-diol 3-sulfate(in) + 2 Na(+)(in)</text>
        <dbReference type="Rhea" id="RHEA:71099"/>
        <dbReference type="ChEBI" id="CHEBI:29101"/>
        <dbReference type="ChEBI" id="CHEBI:190287"/>
    </reaction>
</comment>
<comment type="catalytic activity">
    <reaction evidence="2">
        <text>pregnenolone sulfate(out) + 2 Na(+)(out) = pregnenolone sulfate(in) + 2 Na(+)(in)</text>
        <dbReference type="Rhea" id="RHEA:71095"/>
        <dbReference type="ChEBI" id="CHEBI:29101"/>
        <dbReference type="ChEBI" id="CHEBI:133000"/>
    </reaction>
</comment>
<comment type="catalytic activity">
    <reaction evidence="2">
        <text>taurolithocholate 3-sulfate(out) + 2 Na(+)(out) = taurolithocholate 3-sulfate(in) + 2 Na(+)(in)</text>
        <dbReference type="Rhea" id="RHEA:71275"/>
        <dbReference type="ChEBI" id="CHEBI:29101"/>
        <dbReference type="ChEBI" id="CHEBI:58301"/>
    </reaction>
</comment>
<comment type="catalytic activity">
    <reaction evidence="2">
        <text>androsterone 3alpha-sulfate(out) + 2 Na(+)(out) = androsterone 3alpha-sulfate(in) + 2 Na(+)(in)</text>
        <dbReference type="Rhea" id="RHEA:71351"/>
        <dbReference type="ChEBI" id="CHEBI:29101"/>
        <dbReference type="ChEBI" id="CHEBI:133003"/>
    </reaction>
</comment>
<comment type="catalytic activity">
    <reaction evidence="2">
        <text>5alpha-dihydrotestosterone sulfate(out) + 2 Na(+)(out) = 5alpha-dihydrotestosterone sulfate(in) + 2 Na(+)(in)</text>
        <dbReference type="Rhea" id="RHEA:71355"/>
        <dbReference type="ChEBI" id="CHEBI:29101"/>
        <dbReference type="ChEBI" id="CHEBI:136982"/>
    </reaction>
</comment>
<comment type="catalytic activity">
    <reaction evidence="2">
        <text>17beta-estradiol 17-sulfate(out) + 2 Na(+)(out) = 17beta-estradiol 17-sulfate(in) + 2 Na(+)(in)</text>
        <dbReference type="Rhea" id="RHEA:71359"/>
        <dbReference type="ChEBI" id="CHEBI:29101"/>
        <dbReference type="ChEBI" id="CHEBI:190469"/>
    </reaction>
</comment>
<comment type="catalytic activity">
    <reaction evidence="2">
        <text>17alpha-hydroxypregnenolone 3-sulfate(out) + 2 Na(+)(out) = 17alpha-hydroxypregnenolone 3-sulfate(in) + 2 Na(+)(in)</text>
        <dbReference type="Rhea" id="RHEA:71363"/>
        <dbReference type="ChEBI" id="CHEBI:29101"/>
        <dbReference type="ChEBI" id="CHEBI:133742"/>
    </reaction>
</comment>
<comment type="catalytic activity">
    <reaction evidence="2">
        <text>epiandrosterone 3-sulfate(out) + 2 Na(+)(out) = epiandrosterone 3-sulfate(in) + 2 Na(+)(in)</text>
        <dbReference type="Rhea" id="RHEA:71367"/>
        <dbReference type="ChEBI" id="CHEBI:29101"/>
        <dbReference type="ChEBI" id="CHEBI:133729"/>
    </reaction>
</comment>
<comment type="catalytic activity">
    <reaction evidence="2">
        <text>epitestosterone 17-sulfate(out) + 2 Na(+)(out) = epitestosterone 17-sulfate(in) + 2 Na(+)(in)</text>
        <dbReference type="Rhea" id="RHEA:71371"/>
        <dbReference type="ChEBI" id="CHEBI:29101"/>
        <dbReference type="ChEBI" id="CHEBI:190485"/>
    </reaction>
</comment>
<comment type="catalytic activity">
    <reaction evidence="2">
        <text>testosterone 17-sulfate(out) + 2 Na(+)(out) = testosterone 17-sulfate(in) + 2 Na(+)(in)</text>
        <dbReference type="Rhea" id="RHEA:71375"/>
        <dbReference type="ChEBI" id="CHEBI:29101"/>
        <dbReference type="ChEBI" id="CHEBI:190489"/>
    </reaction>
</comment>
<comment type="catalytic activity">
    <reaction evidence="2">
        <text>16alpha-hydroxydehydroepiandrosterone 3-sulfate(out) + 2 Na(+)(out) = 16alpha-hydroxydehydroepiandrosterone 3-sulfate(in) + 2 Na(+)(in)</text>
        <dbReference type="Rhea" id="RHEA:71391"/>
        <dbReference type="ChEBI" id="CHEBI:29101"/>
        <dbReference type="ChEBI" id="CHEBI:87538"/>
    </reaction>
</comment>
<comment type="subcellular location">
    <subcellularLocation>
        <location evidence="7">Membrane</location>
        <topology evidence="7">Multi-pass membrane protein</topology>
    </subcellularLocation>
</comment>
<comment type="alternative products">
    <event type="alternative splicing"/>
    <isoform>
        <id>A6QP84-1</id>
        <name>1</name>
        <sequence type="displayed"/>
    </isoform>
    <isoform>
        <id>A6QP84-2</id>
        <name>2</name>
        <sequence type="described" ref="VSP_029095 VSP_029096"/>
    </isoform>
    <isoform>
        <id>A6QP84-3</id>
        <name>3</name>
        <sequence type="described" ref="VSP_029092"/>
    </isoform>
    <isoform>
        <id>A6QP84-4</id>
        <name>4</name>
        <sequence type="described" ref="VSP_029093 VSP_029094"/>
    </isoform>
</comment>
<comment type="PTM">
    <text evidence="1">Glycosylated.</text>
</comment>
<comment type="similarity">
    <text evidence="7">Belongs to the bile acid:sodium symporter (BASS) (TC 2.A.28) family.</text>
</comment>
<protein>
    <recommendedName>
        <fullName evidence="6">Sodium-dependent organic anion transporter</fullName>
        <shortName>Soat</shortName>
    </recommendedName>
    <alternativeName>
        <fullName>Solute carrier family 10 member 6</fullName>
        <shortName evidence="6">SLC10A6</shortName>
    </alternativeName>
</protein>
<proteinExistence type="evidence at transcript level"/>
<keyword id="KW-0025">Alternative splicing</keyword>
<keyword id="KW-0325">Glycoprotein</keyword>
<keyword id="KW-0406">Ion transport</keyword>
<keyword id="KW-0445">Lipid transport</keyword>
<keyword id="KW-0472">Membrane</keyword>
<keyword id="KW-1185">Reference proteome</keyword>
<keyword id="KW-0915">Sodium</keyword>
<keyword id="KW-0739">Sodium transport</keyword>
<keyword id="KW-0769">Symport</keyword>
<keyword id="KW-0812">Transmembrane</keyword>
<keyword id="KW-1133">Transmembrane helix</keyword>
<keyword id="KW-0813">Transport</keyword>
<feature type="chain" id="PRO_0000309214" description="Sodium-dependent organic anion transporter">
    <location>
        <begin position="1"/>
        <end position="377"/>
    </location>
</feature>
<feature type="topological domain" description="Extracellular" evidence="4">
    <location>
        <begin position="1"/>
        <end position="29"/>
    </location>
</feature>
<feature type="transmembrane region" description="Helical" evidence="4">
    <location>
        <begin position="30"/>
        <end position="50"/>
    </location>
</feature>
<feature type="topological domain" description="Cytoplasmic" evidence="4">
    <location>
        <begin position="51"/>
        <end position="67"/>
    </location>
</feature>
<feature type="transmembrane region" description="Helical" evidence="4">
    <location>
        <begin position="68"/>
        <end position="88"/>
    </location>
</feature>
<feature type="topological domain" description="Extracellular" evidence="4">
    <location>
        <begin position="89"/>
        <end position="97"/>
    </location>
</feature>
<feature type="transmembrane region" description="Helical" evidence="4">
    <location>
        <begin position="98"/>
        <end position="118"/>
    </location>
</feature>
<feature type="topological domain" description="Cytoplasmic" evidence="4">
    <location>
        <begin position="119"/>
        <end position="133"/>
    </location>
</feature>
<feature type="transmembrane region" description="Helical" evidence="4">
    <location>
        <begin position="134"/>
        <end position="154"/>
    </location>
</feature>
<feature type="topological domain" description="Extracellular" evidence="4">
    <location>
        <begin position="155"/>
        <end position="159"/>
    </location>
</feature>
<feature type="transmembrane region" description="Helical" evidence="4">
    <location>
        <begin position="160"/>
        <end position="180"/>
    </location>
</feature>
<feature type="topological domain" description="Cytoplasmic" evidence="4">
    <location>
        <begin position="181"/>
        <end position="195"/>
    </location>
</feature>
<feature type="transmembrane region" description="Helical" evidence="4">
    <location>
        <begin position="196"/>
        <end position="216"/>
    </location>
</feature>
<feature type="topological domain" description="Extracellular" evidence="4">
    <location>
        <begin position="217"/>
        <end position="223"/>
    </location>
</feature>
<feature type="transmembrane region" description="Helical" evidence="4">
    <location>
        <begin position="224"/>
        <end position="244"/>
    </location>
</feature>
<feature type="topological domain" description="Cytoplasmic" evidence="4">
    <location>
        <begin position="245"/>
        <end position="257"/>
    </location>
</feature>
<feature type="transmembrane region" description="Helical" evidence="4">
    <location>
        <begin position="258"/>
        <end position="278"/>
    </location>
</feature>
<feature type="topological domain" description="Extracellular" evidence="4">
    <location>
        <begin position="279"/>
        <end position="285"/>
    </location>
</feature>
<feature type="transmembrane region" description="Helical" evidence="4">
    <location>
        <begin position="286"/>
        <end position="306"/>
    </location>
</feature>
<feature type="topological domain" description="Cytoplasmic" evidence="4">
    <location>
        <begin position="307"/>
        <end position="377"/>
    </location>
</feature>
<feature type="region of interest" description="Disordered" evidence="5">
    <location>
        <begin position="319"/>
        <end position="377"/>
    </location>
</feature>
<feature type="glycosylation site" description="N-linked (GlcNAc...) asparagine" evidence="4">
    <location>
        <position position="4"/>
    </location>
</feature>
<feature type="glycosylation site" description="N-linked (GlcNAc...) asparagine" evidence="4">
    <location>
        <position position="157"/>
    </location>
</feature>
<feature type="splice variant" id="VSP_029092" description="In isoform 3." evidence="6">
    <location>
        <begin position="126"/>
        <end position="253"/>
    </location>
</feature>
<feature type="splice variant" id="VSP_029093" description="In isoform 4." evidence="6">
    <original>ISMTTCSTMAAL</original>
    <variation>KERILGTHGGRA</variation>
    <location>
        <begin position="127"/>
        <end position="138"/>
    </location>
</feature>
<feature type="splice variant" id="VSP_029094" description="In isoform 4." evidence="6">
    <location>
        <begin position="139"/>
        <end position="377"/>
    </location>
</feature>
<feature type="splice variant" id="VSP_029095" description="In isoform 2." evidence="6">
    <original>IGAIAGGLLFLVVTGAGMVLMKEFWSSDIILLMISFIFPLIGHATGFLLALLTH</original>
    <variation>VQDNFLRNWNSECSDVLHHAAVILHCRATGPDIWLRIGLWTFPDAEWVFHGCCI</variation>
    <location>
        <begin position="196"/>
        <end position="249"/>
    </location>
</feature>
<feature type="splice variant" id="VSP_029096" description="In isoform 2." evidence="6">
    <location>
        <begin position="250"/>
        <end position="377"/>
    </location>
</feature>
<feature type="sequence conflict" description="In Ref. 2; AAI49200." evidence="7" ref="2">
    <original>G</original>
    <variation>S</variation>
    <location>
        <position position="8"/>
    </location>
</feature>
<feature type="sequence conflict" description="In Ref. 1; ABM68134." evidence="7" ref="1">
    <original>S</original>
    <variation>N</variation>
    <location>
        <position position="221"/>
    </location>
</feature>
<reference key="1">
    <citation type="submission" date="2006-12" db="EMBL/GenBank/DDBJ databases">
        <title>Cloning of sodium-dependent organic anion transporter (SLC10A6) from bovine placenta.</title>
        <authorList>
            <person name="Greven H."/>
            <person name="Geyer J."/>
            <person name="Schuler G."/>
            <person name="Hoffmann B."/>
        </authorList>
    </citation>
    <scope>NUCLEOTIDE SEQUENCE [MRNA] (ISOFORMS 1; 2; 3 AND 4)</scope>
    <source>
        <tissue>Placenta</tissue>
    </source>
</reference>
<reference key="2">
    <citation type="submission" date="2007-07" db="EMBL/GenBank/DDBJ databases">
        <authorList>
            <consortium name="NIH - Mammalian Gene Collection (MGC) project"/>
        </authorList>
    </citation>
    <scope>NUCLEOTIDE SEQUENCE [LARGE SCALE MRNA] (ISOFORM 1)</scope>
    <source>
        <strain>Hereford</strain>
        <tissue>Fetal muscle</tissue>
    </source>
</reference>
<reference key="3">
    <citation type="submission" date="2006-02" db="EMBL/GenBank/DDBJ databases">
        <title>Cloning of the sodium-dependent organic anion transporter (SOAT) from bovine testis.</title>
        <authorList>
            <person name="Lekhkota O."/>
            <person name="Brehm R.H."/>
            <person name="Geyer J."/>
            <person name="Bergmann M."/>
        </authorList>
    </citation>
    <scope>NUCLEOTIDE SEQUENCE [MRNA] OF 120-237 (ISOFORM 1)</scope>
    <source>
        <tissue>Testis</tissue>
    </source>
</reference>
<evidence type="ECO:0000250" key="1"/>
<evidence type="ECO:0000250" key="2">
    <source>
        <dbReference type="UniProtKB" id="Q3KNW5"/>
    </source>
</evidence>
<evidence type="ECO:0000250" key="3">
    <source>
        <dbReference type="UniProtKB" id="Q9CXB2"/>
    </source>
</evidence>
<evidence type="ECO:0000255" key="4"/>
<evidence type="ECO:0000256" key="5">
    <source>
        <dbReference type="SAM" id="MobiDB-lite"/>
    </source>
</evidence>
<evidence type="ECO:0000303" key="6">
    <source ref="1"/>
</evidence>
<evidence type="ECO:0000305" key="7"/>
<dbReference type="EMBL" id="EF186076">
    <property type="protein sequence ID" value="ABM68134.1"/>
    <property type="molecule type" value="mRNA"/>
</dbReference>
<dbReference type="EMBL" id="EF495204">
    <property type="protein sequence ID" value="ABP49613.1"/>
    <property type="molecule type" value="mRNA"/>
</dbReference>
<dbReference type="EMBL" id="EF495205">
    <property type="protein sequence ID" value="ABP49614.1"/>
    <property type="molecule type" value="mRNA"/>
</dbReference>
<dbReference type="EMBL" id="EF495206">
    <property type="protein sequence ID" value="ABP49615.1"/>
    <property type="molecule type" value="mRNA"/>
</dbReference>
<dbReference type="EMBL" id="BC149199">
    <property type="protein sequence ID" value="AAI49200.1"/>
    <property type="molecule type" value="mRNA"/>
</dbReference>
<dbReference type="EMBL" id="DQ409211">
    <property type="protein sequence ID" value="ABD66746.1"/>
    <property type="molecule type" value="mRNA"/>
</dbReference>
<dbReference type="SMR" id="A6QP84"/>
<dbReference type="FunCoup" id="A6QP84">
    <property type="interactions" value="14"/>
</dbReference>
<dbReference type="STRING" id="9913.ENSBTAP00000022342"/>
<dbReference type="GlyCosmos" id="A6QP84">
    <property type="glycosylation" value="2 sites, No reported glycans"/>
</dbReference>
<dbReference type="GlyGen" id="A6QP84">
    <property type="glycosylation" value="2 sites"/>
</dbReference>
<dbReference type="PaxDb" id="9913-ENSBTAP00000022342"/>
<dbReference type="KEGG" id="bta:540841"/>
<dbReference type="eggNOG" id="KOG2718">
    <property type="taxonomic scope" value="Eukaryota"/>
</dbReference>
<dbReference type="HOGENOM" id="CLU_130202_0_0_1"/>
<dbReference type="InParanoid" id="A6QP84"/>
<dbReference type="OrthoDB" id="203097at2759"/>
<dbReference type="Proteomes" id="UP000009136">
    <property type="component" value="Unplaced"/>
</dbReference>
<dbReference type="GO" id="GO:0016020">
    <property type="term" value="C:membrane"/>
    <property type="evidence" value="ECO:0007669"/>
    <property type="project" value="UniProtKB-SubCell"/>
</dbReference>
<dbReference type="GO" id="GO:0008508">
    <property type="term" value="F:bile acid:sodium symporter activity"/>
    <property type="evidence" value="ECO:0000318"/>
    <property type="project" value="GO_Central"/>
</dbReference>
<dbReference type="GO" id="GO:0015721">
    <property type="term" value="P:bile acid and bile salt transport"/>
    <property type="evidence" value="ECO:0000318"/>
    <property type="project" value="GO_Central"/>
</dbReference>
<dbReference type="FunFam" id="1.20.1530.20:FF:000010">
    <property type="entry name" value="Solute carrier family 10 member 6"/>
    <property type="match status" value="1"/>
</dbReference>
<dbReference type="Gene3D" id="1.20.1530.20">
    <property type="match status" value="1"/>
</dbReference>
<dbReference type="InterPro" id="IPR002657">
    <property type="entry name" value="BilAc:Na_symport/Acr3"/>
</dbReference>
<dbReference type="InterPro" id="IPR004710">
    <property type="entry name" value="Bilac:Na_transpt"/>
</dbReference>
<dbReference type="InterPro" id="IPR038770">
    <property type="entry name" value="Na+/solute_symporter_sf"/>
</dbReference>
<dbReference type="NCBIfam" id="TIGR00841">
    <property type="entry name" value="bass"/>
    <property type="match status" value="1"/>
</dbReference>
<dbReference type="PANTHER" id="PTHR10361">
    <property type="entry name" value="SODIUM-BILE ACID COTRANSPORTER"/>
    <property type="match status" value="1"/>
</dbReference>
<dbReference type="PANTHER" id="PTHR10361:SF55">
    <property type="entry name" value="SODIUM-DEPENDENT ORGANIC ANION TRANSPORTER"/>
    <property type="match status" value="1"/>
</dbReference>
<dbReference type="Pfam" id="PF01758">
    <property type="entry name" value="SBF"/>
    <property type="match status" value="1"/>
</dbReference>
<sequence>MRANCSSGLACPANSSEEELPEGLKAFGNLDLVFTVVSALMIGLLMFSLGCSVEVQKLWGHIRRPWGIAVGMLCQFGLMPLIAYLLIISFSLKPLQAIAVLIMGCCPGGTVSNIFTFWVDGDMDLSISMTTCSTMAALGMMPLCLYLYTLSWNLEQNLTIPYQNIGITLVCLIIPVAFGIYVNYRWPKQSKIILKIGAIAGGLLFLVVTGAGMVLMKEFWSSDIILLMISFIFPLIGHATGFLLALLTHQSWQRCRTISLETGTQNVQMCFTMLQLSFTAEQLVQIFGFVLAYGLFQMLNGFFMVAAYKMYKRRLKNKHGNEKPSCQEARHRKKSTSPKETTAFLEVNEEATLSPGPSGPVDPHGAPTPTGDIARAK</sequence>
<accession>A6QP84</accession>
<accession>A2IB93</accession>
<accession>A4ZYB2</accession>
<accession>A4ZYB3</accession>
<accession>A4ZYB4</accession>
<accession>Q206K3</accession>
<organism>
    <name type="scientific">Bos taurus</name>
    <name type="common">Bovine</name>
    <dbReference type="NCBI Taxonomy" id="9913"/>
    <lineage>
        <taxon>Eukaryota</taxon>
        <taxon>Metazoa</taxon>
        <taxon>Chordata</taxon>
        <taxon>Craniata</taxon>
        <taxon>Vertebrata</taxon>
        <taxon>Euteleostomi</taxon>
        <taxon>Mammalia</taxon>
        <taxon>Eutheria</taxon>
        <taxon>Laurasiatheria</taxon>
        <taxon>Artiodactyla</taxon>
        <taxon>Ruminantia</taxon>
        <taxon>Pecora</taxon>
        <taxon>Bovidae</taxon>
        <taxon>Bovinae</taxon>
        <taxon>Bos</taxon>
    </lineage>
</organism>
<name>SOAT_BOVIN</name>